<comment type="subcellular location">
    <subcellularLocation>
        <location>Plastid</location>
        <location>Apicoplast</location>
    </subcellularLocation>
</comment>
<comment type="similarity">
    <text evidence="1">Belongs to the universal ribosomal protein uS2 family.</text>
</comment>
<evidence type="ECO:0000305" key="1"/>
<reference key="1">
    <citation type="submission" date="1999-06" db="EMBL/GenBank/DDBJ databases">
        <title>Mapping, cloning, and complete sequence annotation of the 35-kb plastid genome of Toxoplasma gondii.</title>
        <authorList>
            <person name="Kissinger J.C."/>
            <person name="Donald R.G."/>
            <person name="Moulton A.L."/>
            <person name="Gutell R."/>
            <person name="Aiello D.P."/>
            <person name="Lang-Unnasch N."/>
            <person name="Roos D.S."/>
        </authorList>
    </citation>
    <scope>NUCLEOTIDE SEQUENCE [GENOMIC DNA]</scope>
    <source>
        <strain>RH</strain>
    </source>
</reference>
<feature type="chain" id="PRO_0000352165" description="Small ribosomal subunit protein uS2c">
    <location>
        <begin position="1"/>
        <end position="233"/>
    </location>
</feature>
<keyword id="KW-0933">Apicoplast</keyword>
<keyword id="KW-0934">Plastid</keyword>
<keyword id="KW-0687">Ribonucleoprotein</keyword>
<keyword id="KW-0689">Ribosomal protein</keyword>
<dbReference type="EMBL" id="U87145">
    <property type="protein sequence ID" value="AAD41151.1"/>
    <property type="molecule type" value="Genomic_DNA"/>
</dbReference>
<dbReference type="RefSeq" id="NP_044567.1">
    <property type="nucleotide sequence ID" value="NC_001799.1"/>
</dbReference>
<dbReference type="SMR" id="Q9MTD5"/>
<dbReference type="GeneID" id="1466614"/>
<dbReference type="VEuPathDB" id="ToxoDB:TGARI_300700"/>
<dbReference type="VEuPathDB" id="ToxoDB:TGCAST_300700"/>
<dbReference type="VEuPathDB" id="ToxoDB:TGCOUG_300700A"/>
<dbReference type="VEuPathDB" id="ToxoDB:TGCOUG_300700B"/>
<dbReference type="VEuPathDB" id="ToxoDB:TGDOM2_300700"/>
<dbReference type="VEuPathDB" id="ToxoDB:TGFOU_300700"/>
<dbReference type="VEuPathDB" id="ToxoDB:TGMAS_300700"/>
<dbReference type="VEuPathDB" id="ToxoDB:TGME49_300700"/>
<dbReference type="VEuPathDB" id="ToxoDB:TGP89_300700"/>
<dbReference type="VEuPathDB" id="ToxoDB:TGPRC2_300700"/>
<dbReference type="VEuPathDB" id="ToxoDB:TGRH88_086560"/>
<dbReference type="VEuPathDB" id="ToxoDB:TGRUB_300700"/>
<dbReference type="GO" id="GO:0020011">
    <property type="term" value="C:apicoplast"/>
    <property type="evidence" value="ECO:0007669"/>
    <property type="project" value="UniProtKB-SubCell"/>
</dbReference>
<dbReference type="GO" id="GO:0015935">
    <property type="term" value="C:small ribosomal subunit"/>
    <property type="evidence" value="ECO:0007669"/>
    <property type="project" value="InterPro"/>
</dbReference>
<dbReference type="GO" id="GO:0003735">
    <property type="term" value="F:structural constituent of ribosome"/>
    <property type="evidence" value="ECO:0007669"/>
    <property type="project" value="InterPro"/>
</dbReference>
<dbReference type="GO" id="GO:0006412">
    <property type="term" value="P:translation"/>
    <property type="evidence" value="ECO:0007669"/>
    <property type="project" value="InterPro"/>
</dbReference>
<dbReference type="Gene3D" id="3.40.50.10490">
    <property type="entry name" value="Glucose-6-phosphate isomerase like protein, domain 1"/>
    <property type="match status" value="1"/>
</dbReference>
<dbReference type="Gene3D" id="1.10.287.610">
    <property type="entry name" value="Helix hairpin bin"/>
    <property type="match status" value="1"/>
</dbReference>
<dbReference type="HAMAP" id="MF_00291_B">
    <property type="entry name" value="Ribosomal_uS2_B"/>
    <property type="match status" value="1"/>
</dbReference>
<dbReference type="InterPro" id="IPR001865">
    <property type="entry name" value="Ribosomal_uS2"/>
</dbReference>
<dbReference type="InterPro" id="IPR005706">
    <property type="entry name" value="Ribosomal_uS2_bac/mit/plastid"/>
</dbReference>
<dbReference type="InterPro" id="IPR023591">
    <property type="entry name" value="Ribosomal_uS2_flav_dom_sf"/>
</dbReference>
<dbReference type="Pfam" id="PF00318">
    <property type="entry name" value="Ribosomal_S2"/>
    <property type="match status" value="1"/>
</dbReference>
<dbReference type="SUPFAM" id="SSF52313">
    <property type="entry name" value="Ribosomal protein S2"/>
    <property type="match status" value="1"/>
</dbReference>
<geneLocation type="apicoplast"/>
<name>RR2_TOXGO</name>
<sequence length="233" mass="28196">MILLKLNSLINIPIYIGSATSYRQKKFINYIYKKYNNKHFFNIFIILKYLSKAYLYLYILSKYNRSLLFLNSSIKNFNLIKSLANLTNNFYINFFYKIDFLFNWIMFKNKLILLKWLKQLYTFYLKYLFNYLPYNLLIKLYYIYINILKKFGGLEYMQKLPKNIFICNSYSNYLYKNLNLKNFLIISIVDINNENTLKNISVRIIGNNKSYLAIKFIFNILLTALLHGSLFNK</sequence>
<organism>
    <name type="scientific">Toxoplasma gondii</name>
    <dbReference type="NCBI Taxonomy" id="5811"/>
    <lineage>
        <taxon>Eukaryota</taxon>
        <taxon>Sar</taxon>
        <taxon>Alveolata</taxon>
        <taxon>Apicomplexa</taxon>
        <taxon>Conoidasida</taxon>
        <taxon>Coccidia</taxon>
        <taxon>Eucoccidiorida</taxon>
        <taxon>Eimeriorina</taxon>
        <taxon>Sarcocystidae</taxon>
        <taxon>Toxoplasma</taxon>
    </lineage>
</organism>
<accession>Q9MTD5</accession>
<proteinExistence type="inferred from homology"/>
<protein>
    <recommendedName>
        <fullName evidence="1">Small ribosomal subunit protein uS2c</fullName>
    </recommendedName>
    <alternativeName>
        <fullName>30S ribosomal protein S2, apicoplast</fullName>
    </alternativeName>
</protein>